<accession>Q9ZS96</accession>
<accession>F4JGX4</accession>
<accession>Q9M0Z8</accession>
<protein>
    <recommendedName>
        <fullName>Uncharacterized protein At4g04775</fullName>
    </recommendedName>
</protein>
<evidence type="ECO:0000255" key="1">
    <source>
        <dbReference type="PROSITE-ProRule" id="PRU01343"/>
    </source>
</evidence>
<evidence type="ECO:0000305" key="2"/>
<reference key="1">
    <citation type="journal article" date="1999" name="Nature">
        <title>Sequence and analysis of chromosome 4 of the plant Arabidopsis thaliana.</title>
        <authorList>
            <person name="Mayer K.F.X."/>
            <person name="Schueller C."/>
            <person name="Wambutt R."/>
            <person name="Murphy G."/>
            <person name="Volckaert G."/>
            <person name="Pohl T."/>
            <person name="Duesterhoeft A."/>
            <person name="Stiekema W."/>
            <person name="Entian K.-D."/>
            <person name="Terryn N."/>
            <person name="Harris B."/>
            <person name="Ansorge W."/>
            <person name="Brandt P."/>
            <person name="Grivell L.A."/>
            <person name="Rieger M."/>
            <person name="Weichselgartner M."/>
            <person name="de Simone V."/>
            <person name="Obermaier B."/>
            <person name="Mache R."/>
            <person name="Mueller M."/>
            <person name="Kreis M."/>
            <person name="Delseny M."/>
            <person name="Puigdomenech P."/>
            <person name="Watson M."/>
            <person name="Schmidtheini T."/>
            <person name="Reichert B."/>
            <person name="Portetelle D."/>
            <person name="Perez-Alonso M."/>
            <person name="Boutry M."/>
            <person name="Bancroft I."/>
            <person name="Vos P."/>
            <person name="Hoheisel J."/>
            <person name="Zimmermann W."/>
            <person name="Wedler H."/>
            <person name="Ridley P."/>
            <person name="Langham S.-A."/>
            <person name="McCullagh B."/>
            <person name="Bilham L."/>
            <person name="Robben J."/>
            <person name="van der Schueren J."/>
            <person name="Grymonprez B."/>
            <person name="Chuang Y.-J."/>
            <person name="Vandenbussche F."/>
            <person name="Braeken M."/>
            <person name="Weltjens I."/>
            <person name="Voet M."/>
            <person name="Bastiaens I."/>
            <person name="Aert R."/>
            <person name="Defoor E."/>
            <person name="Weitzenegger T."/>
            <person name="Bothe G."/>
            <person name="Ramsperger U."/>
            <person name="Hilbert H."/>
            <person name="Braun M."/>
            <person name="Holzer E."/>
            <person name="Brandt A."/>
            <person name="Peters S."/>
            <person name="van Staveren M."/>
            <person name="Dirkse W."/>
            <person name="Mooijman P."/>
            <person name="Klein Lankhorst R."/>
            <person name="Rose M."/>
            <person name="Hauf J."/>
            <person name="Koetter P."/>
            <person name="Berneiser S."/>
            <person name="Hempel S."/>
            <person name="Feldpausch M."/>
            <person name="Lamberth S."/>
            <person name="Van den Daele H."/>
            <person name="De Keyser A."/>
            <person name="Buysshaert C."/>
            <person name="Gielen J."/>
            <person name="Villarroel R."/>
            <person name="De Clercq R."/>
            <person name="van Montagu M."/>
            <person name="Rogers J."/>
            <person name="Cronin A."/>
            <person name="Quail M.A."/>
            <person name="Bray-Allen S."/>
            <person name="Clark L."/>
            <person name="Doggett J."/>
            <person name="Hall S."/>
            <person name="Kay M."/>
            <person name="Lennard N."/>
            <person name="McLay K."/>
            <person name="Mayes R."/>
            <person name="Pettett A."/>
            <person name="Rajandream M.A."/>
            <person name="Lyne M."/>
            <person name="Benes V."/>
            <person name="Rechmann S."/>
            <person name="Borkova D."/>
            <person name="Bloecker H."/>
            <person name="Scharfe M."/>
            <person name="Grimm M."/>
            <person name="Loehnert T.-H."/>
            <person name="Dose S."/>
            <person name="de Haan M."/>
            <person name="Maarse A.C."/>
            <person name="Schaefer M."/>
            <person name="Mueller-Auer S."/>
            <person name="Gabel C."/>
            <person name="Fuchs M."/>
            <person name="Fartmann B."/>
            <person name="Granderath K."/>
            <person name="Dauner D."/>
            <person name="Herzl A."/>
            <person name="Neumann S."/>
            <person name="Argiriou A."/>
            <person name="Vitale D."/>
            <person name="Liguori R."/>
            <person name="Piravandi E."/>
            <person name="Massenet O."/>
            <person name="Quigley F."/>
            <person name="Clabauld G."/>
            <person name="Muendlein A."/>
            <person name="Felber R."/>
            <person name="Schnabl S."/>
            <person name="Hiller R."/>
            <person name="Schmidt W."/>
            <person name="Lecharny A."/>
            <person name="Aubourg S."/>
            <person name="Chefdor F."/>
            <person name="Cooke R."/>
            <person name="Berger C."/>
            <person name="Monfort A."/>
            <person name="Casacuberta E."/>
            <person name="Gibbons T."/>
            <person name="Weber N."/>
            <person name="Vandenbol M."/>
            <person name="Bargues M."/>
            <person name="Terol J."/>
            <person name="Torres A."/>
            <person name="Perez-Perez A."/>
            <person name="Purnelle B."/>
            <person name="Bent E."/>
            <person name="Johnson S."/>
            <person name="Tacon D."/>
            <person name="Jesse T."/>
            <person name="Heijnen L."/>
            <person name="Schwarz S."/>
            <person name="Scholler P."/>
            <person name="Heber S."/>
            <person name="Francs P."/>
            <person name="Bielke C."/>
            <person name="Frishman D."/>
            <person name="Haase D."/>
            <person name="Lemcke K."/>
            <person name="Mewes H.-W."/>
            <person name="Stocker S."/>
            <person name="Zaccaria P."/>
            <person name="Bevan M."/>
            <person name="Wilson R.K."/>
            <person name="de la Bastide M."/>
            <person name="Habermann K."/>
            <person name="Parnell L."/>
            <person name="Dedhia N."/>
            <person name="Gnoj L."/>
            <person name="Schutz K."/>
            <person name="Huang E."/>
            <person name="Spiegel L."/>
            <person name="Sekhon M."/>
            <person name="Murray J."/>
            <person name="Sheet P."/>
            <person name="Cordes M."/>
            <person name="Abu-Threideh J."/>
            <person name="Stoneking T."/>
            <person name="Kalicki J."/>
            <person name="Graves T."/>
            <person name="Harmon G."/>
            <person name="Edwards J."/>
            <person name="Latreille P."/>
            <person name="Courtney L."/>
            <person name="Cloud J."/>
            <person name="Abbott A."/>
            <person name="Scott K."/>
            <person name="Johnson D."/>
            <person name="Minx P."/>
            <person name="Bentley D."/>
            <person name="Fulton B."/>
            <person name="Miller N."/>
            <person name="Greco T."/>
            <person name="Kemp K."/>
            <person name="Kramer J."/>
            <person name="Fulton L."/>
            <person name="Mardis E."/>
            <person name="Dante M."/>
            <person name="Pepin K."/>
            <person name="Hillier L.W."/>
            <person name="Nelson J."/>
            <person name="Spieth J."/>
            <person name="Ryan E."/>
            <person name="Andrews S."/>
            <person name="Geisel C."/>
            <person name="Layman D."/>
            <person name="Du H."/>
            <person name="Ali J."/>
            <person name="Berghoff A."/>
            <person name="Jones K."/>
            <person name="Drone K."/>
            <person name="Cotton M."/>
            <person name="Joshu C."/>
            <person name="Antonoiu B."/>
            <person name="Zidanic M."/>
            <person name="Strong C."/>
            <person name="Sun H."/>
            <person name="Lamar B."/>
            <person name="Yordan C."/>
            <person name="Ma P."/>
            <person name="Zhong J."/>
            <person name="Preston R."/>
            <person name="Vil D."/>
            <person name="Shekher M."/>
            <person name="Matero A."/>
            <person name="Shah R."/>
            <person name="Swaby I.K."/>
            <person name="O'Shaughnessy A."/>
            <person name="Rodriguez M."/>
            <person name="Hoffman J."/>
            <person name="Till S."/>
            <person name="Granat S."/>
            <person name="Shohdy N."/>
            <person name="Hasegawa A."/>
            <person name="Hameed A."/>
            <person name="Lodhi M."/>
            <person name="Johnson A."/>
            <person name="Chen E."/>
            <person name="Marra M.A."/>
            <person name="Martienssen R."/>
            <person name="McCombie W.R."/>
        </authorList>
    </citation>
    <scope>NUCLEOTIDE SEQUENCE [LARGE SCALE GENOMIC DNA]</scope>
    <source>
        <strain>cv. Columbia</strain>
    </source>
</reference>
<reference key="2">
    <citation type="journal article" date="2017" name="Plant J.">
        <title>Araport11: a complete reannotation of the Arabidopsis thaliana reference genome.</title>
        <authorList>
            <person name="Cheng C.Y."/>
            <person name="Krishnakumar V."/>
            <person name="Chan A.P."/>
            <person name="Thibaud-Nissen F."/>
            <person name="Schobel S."/>
            <person name="Town C.D."/>
        </authorList>
    </citation>
    <scope>GENOME REANNOTATION</scope>
    <source>
        <strain>cv. Columbia</strain>
    </source>
</reference>
<proteinExistence type="evidence at transcript level"/>
<organism>
    <name type="scientific">Arabidopsis thaliana</name>
    <name type="common">Mouse-ear cress</name>
    <dbReference type="NCBI Taxonomy" id="3702"/>
    <lineage>
        <taxon>Eukaryota</taxon>
        <taxon>Viridiplantae</taxon>
        <taxon>Streptophyta</taxon>
        <taxon>Embryophyta</taxon>
        <taxon>Tracheophyta</taxon>
        <taxon>Spermatophyta</taxon>
        <taxon>Magnoliopsida</taxon>
        <taxon>eudicotyledons</taxon>
        <taxon>Gunneridae</taxon>
        <taxon>Pentapetalae</taxon>
        <taxon>rosids</taxon>
        <taxon>malvids</taxon>
        <taxon>Brassicales</taxon>
        <taxon>Brassicaceae</taxon>
        <taxon>Camelineae</taxon>
        <taxon>Arabidopsis</taxon>
    </lineage>
</organism>
<gene>
    <name type="ordered locus">At4g04775</name>
    <name type="ORF">T4B21.8</name>
</gene>
<keyword id="KW-0479">Metal-binding</keyword>
<keyword id="KW-1185">Reference proteome</keyword>
<keyword id="KW-0862">Zinc</keyword>
<keyword id="KW-0863">Zinc-finger</keyword>
<comment type="sequence caution" evidence="2">
    <conflict type="erroneous gene model prediction">
        <sequence resource="EMBL-CDS" id="CAB80843"/>
    </conflict>
    <text>The predicted gene At4g04780 has been split into 2 genes: At4g04775 and At4g04780.</text>
</comment>
<name>Y4478_ARATH</name>
<sequence length="160" mass="18345">MSTNSYYSSASSSGFRVCPPGVPSKCWCGEEIITFTSKTKENPYRRFYRCAIAMKRENEEHLFKWVDEALLDEIKMVNEKCKRVVENISDLRMNVMANMELLNKNAKQMEEELIKKMEGELLTMKENVEELGHVMAKSALKTVGVAVVIVASIVWLWGRV</sequence>
<dbReference type="EMBL" id="AF118223">
    <property type="protein sequence ID" value="AAD03442.1"/>
    <property type="molecule type" value="Genomic_DNA"/>
</dbReference>
<dbReference type="EMBL" id="AL161501">
    <property type="protein sequence ID" value="CAB80843.1"/>
    <property type="status" value="ALT_SEQ"/>
    <property type="molecule type" value="Genomic_DNA"/>
</dbReference>
<dbReference type="EMBL" id="CP002687">
    <property type="protein sequence ID" value="AEE82424.2"/>
    <property type="molecule type" value="Genomic_DNA"/>
</dbReference>
<dbReference type="RefSeq" id="NP_001190673.2">
    <property type="nucleotide sequence ID" value="NM_001203744.2"/>
</dbReference>
<dbReference type="SMR" id="Q9ZS96"/>
<dbReference type="IntAct" id="Q9ZS96">
    <property type="interactions" value="1"/>
</dbReference>
<dbReference type="STRING" id="3702.Q9ZS96"/>
<dbReference type="PaxDb" id="3702-AT4G04775.1"/>
<dbReference type="ProteomicsDB" id="242825"/>
<dbReference type="EnsemblPlants" id="AT4G04775.1">
    <property type="protein sequence ID" value="AT4G04775.1"/>
    <property type="gene ID" value="AT4G04775"/>
</dbReference>
<dbReference type="GeneID" id="10723032"/>
<dbReference type="Gramene" id="AT4G04775.1">
    <property type="protein sequence ID" value="AT4G04775.1"/>
    <property type="gene ID" value="AT4G04775"/>
</dbReference>
<dbReference type="KEGG" id="ath:AT4G04775"/>
<dbReference type="Araport" id="AT4G04775"/>
<dbReference type="TAIR" id="AT4G04775"/>
<dbReference type="HOGENOM" id="CLU_134040_2_0_1"/>
<dbReference type="InParanoid" id="Q9ZS96"/>
<dbReference type="OMA" id="NVMANME"/>
<dbReference type="PhylomeDB" id="Q9ZS96"/>
<dbReference type="PRO" id="PR:Q9ZS96"/>
<dbReference type="Proteomes" id="UP000006548">
    <property type="component" value="Chromosome 4"/>
</dbReference>
<dbReference type="GO" id="GO:0008270">
    <property type="term" value="F:zinc ion binding"/>
    <property type="evidence" value="ECO:0007669"/>
    <property type="project" value="UniProtKB-KW"/>
</dbReference>
<dbReference type="InterPro" id="IPR010666">
    <property type="entry name" value="Znf_GRF"/>
</dbReference>
<dbReference type="PANTHER" id="PTHR33248">
    <property type="entry name" value="ZINC ION-BINDING PROTEIN"/>
    <property type="match status" value="1"/>
</dbReference>
<dbReference type="PROSITE" id="PS51999">
    <property type="entry name" value="ZF_GRF"/>
    <property type="match status" value="1"/>
</dbReference>
<feature type="chain" id="PRO_0000397047" description="Uncharacterized protein At4g04775">
    <location>
        <begin position="1"/>
        <end position="160"/>
    </location>
</feature>
<feature type="zinc finger region" description="GRF-type; atypical" evidence="1">
    <location>
        <begin position="26"/>
        <end position="69"/>
    </location>
</feature>
<feature type="binding site" evidence="1">
    <location>
        <position position="26"/>
    </location>
    <ligand>
        <name>Zn(2+)</name>
        <dbReference type="ChEBI" id="CHEBI:29105"/>
    </ligand>
</feature>
<feature type="binding site" evidence="1">
    <location>
        <position position="28"/>
    </location>
    <ligand>
        <name>Zn(2+)</name>
        <dbReference type="ChEBI" id="CHEBI:29105"/>
    </ligand>
</feature>
<feature type="binding site" evidence="1">
    <location>
        <position position="50"/>
    </location>
    <ligand>
        <name>Zn(2+)</name>
        <dbReference type="ChEBI" id="CHEBI:29105"/>
    </ligand>
</feature>
<feature type="binding site" evidence="1">
    <location>
        <position position="61"/>
    </location>
    <ligand>
        <name>Zn(2+)</name>
        <dbReference type="ChEBI" id="CHEBI:29105"/>
    </ligand>
</feature>